<organism>
    <name type="scientific">Salmonella paratyphi A (strain ATCC 9150 / SARB42)</name>
    <dbReference type="NCBI Taxonomy" id="295319"/>
    <lineage>
        <taxon>Bacteria</taxon>
        <taxon>Pseudomonadati</taxon>
        <taxon>Pseudomonadota</taxon>
        <taxon>Gammaproteobacteria</taxon>
        <taxon>Enterobacterales</taxon>
        <taxon>Enterobacteriaceae</taxon>
        <taxon>Salmonella</taxon>
    </lineage>
</organism>
<comment type="function">
    <text evidence="1">Part of the ABC transporter complex MetNIQ involved in methionine import. Responsible for energy coupling to the transport system.</text>
</comment>
<comment type="catalytic activity">
    <reaction evidence="1">
        <text>L-methionine(out) + ATP + H2O = L-methionine(in) + ADP + phosphate + H(+)</text>
        <dbReference type="Rhea" id="RHEA:29779"/>
        <dbReference type="ChEBI" id="CHEBI:15377"/>
        <dbReference type="ChEBI" id="CHEBI:15378"/>
        <dbReference type="ChEBI" id="CHEBI:30616"/>
        <dbReference type="ChEBI" id="CHEBI:43474"/>
        <dbReference type="ChEBI" id="CHEBI:57844"/>
        <dbReference type="ChEBI" id="CHEBI:456216"/>
        <dbReference type="EC" id="7.4.2.11"/>
    </reaction>
</comment>
<comment type="catalytic activity">
    <reaction evidence="1">
        <text>D-methionine(out) + ATP + H2O = D-methionine(in) + ADP + phosphate + H(+)</text>
        <dbReference type="Rhea" id="RHEA:29767"/>
        <dbReference type="ChEBI" id="CHEBI:15377"/>
        <dbReference type="ChEBI" id="CHEBI:15378"/>
        <dbReference type="ChEBI" id="CHEBI:30616"/>
        <dbReference type="ChEBI" id="CHEBI:43474"/>
        <dbReference type="ChEBI" id="CHEBI:57932"/>
        <dbReference type="ChEBI" id="CHEBI:456216"/>
        <dbReference type="EC" id="7.4.2.11"/>
    </reaction>
</comment>
<comment type="subunit">
    <text evidence="1">The complex is composed of two ATP-binding proteins (MetN), two transmembrane proteins (MetI) and a solute-binding protein (MetQ).</text>
</comment>
<comment type="subcellular location">
    <subcellularLocation>
        <location evidence="1">Cell inner membrane</location>
        <topology evidence="1">Peripheral membrane protein</topology>
    </subcellularLocation>
</comment>
<comment type="similarity">
    <text evidence="1">Belongs to the ABC transporter superfamily. Methionine importer (TC 3.A.1.24) family.</text>
</comment>
<sequence>MIKLSNITKVFQQGARTIQALNNVSLHVPAGQIYGVIGASGAGKSTLIRCVNLLERPTEGSVMVGGQELTTLSESELTKARRQIGMIFQHFNLLSSRTVFGNVALPLELDNTPKEEIKRRVTELLDLVGLGDKHDSYPANLSGGQKQRVAIARALASNPKVLLCDEATSALDPATTRSILELLKDINRRLGLTILLITHEMDVVKRICDCVAVISNGELIEQDTVSEVFSHPKTPLAQKFIQSTLHLDIPEDYQARLKASPETDSVPMLRMEFTGQSVDAPLLSETARRFNVNNNIISAQMDYAGGVKFGIMLTEMHGTQEETQAAIAWLQDHHVKVEVLGYV</sequence>
<protein>
    <recommendedName>
        <fullName evidence="1">Methionine import ATP-binding protein MetN 1</fullName>
        <ecNumber evidence="1">7.4.2.11</ecNumber>
    </recommendedName>
</protein>
<dbReference type="EC" id="7.4.2.11" evidence="1"/>
<dbReference type="EMBL" id="CP000026">
    <property type="protein sequence ID" value="AAV76283.1"/>
    <property type="molecule type" value="Genomic_DNA"/>
</dbReference>
<dbReference type="SMR" id="Q5PID0"/>
<dbReference type="KEGG" id="spt:SPA0254"/>
<dbReference type="HOGENOM" id="CLU_000604_1_3_6"/>
<dbReference type="Proteomes" id="UP000008185">
    <property type="component" value="Chromosome"/>
</dbReference>
<dbReference type="GO" id="GO:0009276">
    <property type="term" value="C:Gram-negative-bacterium-type cell wall"/>
    <property type="evidence" value="ECO:0007669"/>
    <property type="project" value="InterPro"/>
</dbReference>
<dbReference type="GO" id="GO:0005886">
    <property type="term" value="C:plasma membrane"/>
    <property type="evidence" value="ECO:0007669"/>
    <property type="project" value="UniProtKB-SubCell"/>
</dbReference>
<dbReference type="GO" id="GO:0033232">
    <property type="term" value="F:ABC-type D-methionine transporter activity"/>
    <property type="evidence" value="ECO:0007669"/>
    <property type="project" value="UniProtKB-EC"/>
</dbReference>
<dbReference type="GO" id="GO:0005524">
    <property type="term" value="F:ATP binding"/>
    <property type="evidence" value="ECO:0007669"/>
    <property type="project" value="UniProtKB-KW"/>
</dbReference>
<dbReference type="GO" id="GO:0016887">
    <property type="term" value="F:ATP hydrolysis activity"/>
    <property type="evidence" value="ECO:0007669"/>
    <property type="project" value="InterPro"/>
</dbReference>
<dbReference type="CDD" id="cd03258">
    <property type="entry name" value="ABC_MetN_methionine_transporter"/>
    <property type="match status" value="1"/>
</dbReference>
<dbReference type="FunFam" id="3.30.70.260:FF:000014">
    <property type="entry name" value="Methionine import ATP-binding protein MetN"/>
    <property type="match status" value="1"/>
</dbReference>
<dbReference type="FunFam" id="3.40.50.300:FF:000233">
    <property type="entry name" value="Methionine import ATP-binding protein MetN"/>
    <property type="match status" value="1"/>
</dbReference>
<dbReference type="Gene3D" id="3.30.70.260">
    <property type="match status" value="1"/>
</dbReference>
<dbReference type="Gene3D" id="3.40.50.300">
    <property type="entry name" value="P-loop containing nucleotide triphosphate hydrolases"/>
    <property type="match status" value="1"/>
</dbReference>
<dbReference type="InterPro" id="IPR003593">
    <property type="entry name" value="AAA+_ATPase"/>
</dbReference>
<dbReference type="InterPro" id="IPR012692">
    <property type="entry name" value="ABC_MetN_proteobac"/>
</dbReference>
<dbReference type="InterPro" id="IPR003439">
    <property type="entry name" value="ABC_transporter-like_ATP-bd"/>
</dbReference>
<dbReference type="InterPro" id="IPR017871">
    <property type="entry name" value="ABC_transporter-like_CS"/>
</dbReference>
<dbReference type="InterPro" id="IPR045865">
    <property type="entry name" value="ACT-like_dom_sf"/>
</dbReference>
<dbReference type="InterPro" id="IPR041701">
    <property type="entry name" value="MetN_ABC"/>
</dbReference>
<dbReference type="InterPro" id="IPR050086">
    <property type="entry name" value="MetN_ABC_transporter-like"/>
</dbReference>
<dbReference type="InterPro" id="IPR018449">
    <property type="entry name" value="NIL_domain"/>
</dbReference>
<dbReference type="InterPro" id="IPR027417">
    <property type="entry name" value="P-loop_NTPase"/>
</dbReference>
<dbReference type="NCBIfam" id="TIGR02314">
    <property type="entry name" value="ABC_MetN"/>
    <property type="match status" value="1"/>
</dbReference>
<dbReference type="PANTHER" id="PTHR43166">
    <property type="entry name" value="AMINO ACID IMPORT ATP-BINDING PROTEIN"/>
    <property type="match status" value="1"/>
</dbReference>
<dbReference type="PANTHER" id="PTHR43166:SF30">
    <property type="entry name" value="METHIONINE IMPORT ATP-BINDING PROTEIN METN"/>
    <property type="match status" value="1"/>
</dbReference>
<dbReference type="Pfam" id="PF00005">
    <property type="entry name" value="ABC_tran"/>
    <property type="match status" value="1"/>
</dbReference>
<dbReference type="Pfam" id="PF09383">
    <property type="entry name" value="NIL"/>
    <property type="match status" value="1"/>
</dbReference>
<dbReference type="SMART" id="SM00382">
    <property type="entry name" value="AAA"/>
    <property type="match status" value="1"/>
</dbReference>
<dbReference type="SMART" id="SM00930">
    <property type="entry name" value="NIL"/>
    <property type="match status" value="1"/>
</dbReference>
<dbReference type="SUPFAM" id="SSF55021">
    <property type="entry name" value="ACT-like"/>
    <property type="match status" value="1"/>
</dbReference>
<dbReference type="SUPFAM" id="SSF52540">
    <property type="entry name" value="P-loop containing nucleoside triphosphate hydrolases"/>
    <property type="match status" value="1"/>
</dbReference>
<dbReference type="PROSITE" id="PS00211">
    <property type="entry name" value="ABC_TRANSPORTER_1"/>
    <property type="match status" value="1"/>
</dbReference>
<dbReference type="PROSITE" id="PS50893">
    <property type="entry name" value="ABC_TRANSPORTER_2"/>
    <property type="match status" value="1"/>
</dbReference>
<dbReference type="PROSITE" id="PS51264">
    <property type="entry name" value="METN"/>
    <property type="match status" value="1"/>
</dbReference>
<accession>Q5PID0</accession>
<gene>
    <name evidence="1" type="primary">metN1</name>
    <name type="ordered locus">SPA0254</name>
</gene>
<keyword id="KW-0029">Amino-acid transport</keyword>
<keyword id="KW-0067">ATP-binding</keyword>
<keyword id="KW-0997">Cell inner membrane</keyword>
<keyword id="KW-1003">Cell membrane</keyword>
<keyword id="KW-0472">Membrane</keyword>
<keyword id="KW-0547">Nucleotide-binding</keyword>
<keyword id="KW-1278">Translocase</keyword>
<keyword id="KW-0813">Transport</keyword>
<proteinExistence type="inferred from homology"/>
<evidence type="ECO:0000255" key="1">
    <source>
        <dbReference type="HAMAP-Rule" id="MF_01719"/>
    </source>
</evidence>
<name>METN1_SALPA</name>
<feature type="chain" id="PRO_0000270378" description="Methionine import ATP-binding protein MetN 1">
    <location>
        <begin position="1"/>
        <end position="343"/>
    </location>
</feature>
<feature type="domain" description="ABC transporter" evidence="1">
    <location>
        <begin position="2"/>
        <end position="241"/>
    </location>
</feature>
<feature type="binding site" evidence="1">
    <location>
        <begin position="38"/>
        <end position="45"/>
    </location>
    <ligand>
        <name>ATP</name>
        <dbReference type="ChEBI" id="CHEBI:30616"/>
    </ligand>
</feature>
<reference key="1">
    <citation type="journal article" date="2004" name="Nat. Genet.">
        <title>Comparison of genome degradation in Paratyphi A and Typhi, human-restricted serovars of Salmonella enterica that cause typhoid.</title>
        <authorList>
            <person name="McClelland M."/>
            <person name="Sanderson K.E."/>
            <person name="Clifton S.W."/>
            <person name="Latreille P."/>
            <person name="Porwollik S."/>
            <person name="Sabo A."/>
            <person name="Meyer R."/>
            <person name="Bieri T."/>
            <person name="Ozersky P."/>
            <person name="McLellan M."/>
            <person name="Harkins C.R."/>
            <person name="Wang C."/>
            <person name="Nguyen C."/>
            <person name="Berghoff A."/>
            <person name="Elliott G."/>
            <person name="Kohlberg S."/>
            <person name="Strong C."/>
            <person name="Du F."/>
            <person name="Carter J."/>
            <person name="Kremizki C."/>
            <person name="Layman D."/>
            <person name="Leonard S."/>
            <person name="Sun H."/>
            <person name="Fulton L."/>
            <person name="Nash W."/>
            <person name="Miner T."/>
            <person name="Minx P."/>
            <person name="Delehaunty K."/>
            <person name="Fronick C."/>
            <person name="Magrini V."/>
            <person name="Nhan M."/>
            <person name="Warren W."/>
            <person name="Florea L."/>
            <person name="Spieth J."/>
            <person name="Wilson R.K."/>
        </authorList>
    </citation>
    <scope>NUCLEOTIDE SEQUENCE [LARGE SCALE GENOMIC DNA]</scope>
    <source>
        <strain>ATCC 9150 / SARB42</strain>
    </source>
</reference>